<dbReference type="EC" id="4.2.1.136"/>
<dbReference type="EC" id="5.1.99.6"/>
<dbReference type="EMBL" id="FR796446">
    <property type="protein sequence ID" value="CAM66687.1"/>
    <property type="molecule type" value="Genomic_DNA"/>
</dbReference>
<dbReference type="RefSeq" id="XP_001464306.1">
    <property type="nucleotide sequence ID" value="XM_001464269.1"/>
</dbReference>
<dbReference type="SMR" id="A4HW65"/>
<dbReference type="STRING" id="5671.A4HW65"/>
<dbReference type="GeneID" id="5067633"/>
<dbReference type="KEGG" id="lif:LINJ_14_1270"/>
<dbReference type="VEuPathDB" id="TriTrypDB:LINF_140018300"/>
<dbReference type="eggNOG" id="KOG2585">
    <property type="taxonomic scope" value="Eukaryota"/>
</dbReference>
<dbReference type="eggNOG" id="KOG3974">
    <property type="taxonomic scope" value="Eukaryota"/>
</dbReference>
<dbReference type="InParanoid" id="A4HW65"/>
<dbReference type="OMA" id="NAHKGDY"/>
<dbReference type="Proteomes" id="UP000008153">
    <property type="component" value="Chromosome 14"/>
</dbReference>
<dbReference type="GO" id="GO:0052855">
    <property type="term" value="F:ADP-dependent NAD(P)H-hydrate dehydratase activity"/>
    <property type="evidence" value="ECO:0007669"/>
    <property type="project" value="UniProtKB-EC"/>
</dbReference>
<dbReference type="GO" id="GO:0005524">
    <property type="term" value="F:ATP binding"/>
    <property type="evidence" value="ECO:0007669"/>
    <property type="project" value="UniProtKB-KW"/>
</dbReference>
<dbReference type="GO" id="GO:0047453">
    <property type="term" value="F:ATP-dependent NAD(P)H-hydrate dehydratase activity"/>
    <property type="evidence" value="ECO:0007669"/>
    <property type="project" value="UniProtKB-UniRule"/>
</dbReference>
<dbReference type="GO" id="GO:0046872">
    <property type="term" value="F:metal ion binding"/>
    <property type="evidence" value="ECO:0007669"/>
    <property type="project" value="UniProtKB-KW"/>
</dbReference>
<dbReference type="GO" id="GO:0052856">
    <property type="term" value="F:NAD(P)HX epimerase activity"/>
    <property type="evidence" value="ECO:0007669"/>
    <property type="project" value="UniProtKB-UniRule"/>
</dbReference>
<dbReference type="GO" id="GO:0110051">
    <property type="term" value="P:metabolite repair"/>
    <property type="evidence" value="ECO:0007669"/>
    <property type="project" value="TreeGrafter"/>
</dbReference>
<dbReference type="GO" id="GO:0046496">
    <property type="term" value="P:nicotinamide nucleotide metabolic process"/>
    <property type="evidence" value="ECO:0007669"/>
    <property type="project" value="UniProtKB-UniRule"/>
</dbReference>
<dbReference type="CDD" id="cd01171">
    <property type="entry name" value="YXKO-related"/>
    <property type="match status" value="1"/>
</dbReference>
<dbReference type="FunFam" id="3.40.1190.20:FF:000017">
    <property type="entry name" value="Multifunctional fusion protein"/>
    <property type="match status" value="1"/>
</dbReference>
<dbReference type="FunFam" id="3.40.50.10260:FF:000003">
    <property type="entry name" value="Multifunctional fusion protein"/>
    <property type="match status" value="1"/>
</dbReference>
<dbReference type="Gene3D" id="3.40.1190.20">
    <property type="match status" value="1"/>
</dbReference>
<dbReference type="Gene3D" id="3.40.50.10260">
    <property type="entry name" value="YjeF N-terminal domain"/>
    <property type="match status" value="1"/>
</dbReference>
<dbReference type="HAMAP" id="MF_01965">
    <property type="entry name" value="NADHX_dehydratase"/>
    <property type="match status" value="1"/>
</dbReference>
<dbReference type="HAMAP" id="MF_01966">
    <property type="entry name" value="NADHX_epimerase"/>
    <property type="match status" value="1"/>
</dbReference>
<dbReference type="InterPro" id="IPR017953">
    <property type="entry name" value="Carbohydrate_kinase_pred_CS"/>
</dbReference>
<dbReference type="InterPro" id="IPR000631">
    <property type="entry name" value="CARKD"/>
</dbReference>
<dbReference type="InterPro" id="IPR030677">
    <property type="entry name" value="Nnr"/>
</dbReference>
<dbReference type="InterPro" id="IPR029056">
    <property type="entry name" value="Ribokinase-like"/>
</dbReference>
<dbReference type="InterPro" id="IPR004443">
    <property type="entry name" value="YjeF_N_dom"/>
</dbReference>
<dbReference type="InterPro" id="IPR036652">
    <property type="entry name" value="YjeF_N_dom_sf"/>
</dbReference>
<dbReference type="NCBIfam" id="TIGR00196">
    <property type="entry name" value="yjeF_cterm"/>
    <property type="match status" value="1"/>
</dbReference>
<dbReference type="NCBIfam" id="TIGR00197">
    <property type="entry name" value="yjeF_nterm"/>
    <property type="match status" value="1"/>
</dbReference>
<dbReference type="PANTHER" id="PTHR12592:SF0">
    <property type="entry name" value="ATP-DEPENDENT (S)-NAD(P)H-HYDRATE DEHYDRATASE"/>
    <property type="match status" value="1"/>
</dbReference>
<dbReference type="PANTHER" id="PTHR12592">
    <property type="entry name" value="ATP-DEPENDENT (S)-NAD(P)H-HYDRATE DEHYDRATASE FAMILY MEMBER"/>
    <property type="match status" value="1"/>
</dbReference>
<dbReference type="Pfam" id="PF01256">
    <property type="entry name" value="Carb_kinase"/>
    <property type="match status" value="1"/>
</dbReference>
<dbReference type="Pfam" id="PF03853">
    <property type="entry name" value="YjeF_N"/>
    <property type="match status" value="1"/>
</dbReference>
<dbReference type="PIRSF" id="PIRSF017184">
    <property type="entry name" value="Nnr"/>
    <property type="match status" value="1"/>
</dbReference>
<dbReference type="SUPFAM" id="SSF53613">
    <property type="entry name" value="Ribokinase-like"/>
    <property type="match status" value="1"/>
</dbReference>
<dbReference type="SUPFAM" id="SSF64153">
    <property type="entry name" value="YjeF N-terminal domain-like"/>
    <property type="match status" value="1"/>
</dbReference>
<dbReference type="PROSITE" id="PS01050">
    <property type="entry name" value="YJEF_C_2"/>
    <property type="match status" value="1"/>
</dbReference>
<dbReference type="PROSITE" id="PS51383">
    <property type="entry name" value="YJEF_C_3"/>
    <property type="match status" value="1"/>
</dbReference>
<dbReference type="PROSITE" id="PS51385">
    <property type="entry name" value="YJEF_N"/>
    <property type="match status" value="1"/>
</dbReference>
<gene>
    <name type="ORF">LINJ_14_1270</name>
</gene>
<sequence length="560" mass="58328">MLSRLSERCSIATGLEQVLRRHVWSAAWLRDAEPAAAASQNIDLSCLMERAGRAAYDVFSNLYTSQQHWLILVGSGNNGGDGYVIARHAREAGKIVTVLCMPHSKPLPAEAASAQHAWKAVGGTETTMNPGAPLQLPADVDLIVDGLLGTGICGPPREQYEDVIRHINGLPVPRVAIDIPSGLNAETGEVAGACVKADHTATFICLKPGLLTGQAKDYVGQLHYRSLGLEDWMTAPERMRAALCRRVALDDVYEYFGIRRSALAHKGRCGKVILVGGDHGFGGATLMSAEACVTVGAGLTRVLTRPEYAAPLLTRCPEAMVTAVETDTGGQLEQQMLAAFEWASTLAVGPGLGTGAYGQAALTAALRHAEVHQDKTLVLDADALNLLAGRLHGKEGGAAAGAGKHLPVLPNSIITPHPGEAARLLACRVADVEKDRLAAARRLAAILGGTCLLKGPGTIVHCHSSAKTAIVDAGNAGMASGGMGDVLTGLLAGLAAQRMHDTFNTTCAGALVHGVAADMVAAEDGRGTRGIRATELIHRVPLIVNASGPSPATRQRSSGP</sequence>
<keyword id="KW-0067">ATP-binding</keyword>
<keyword id="KW-0413">Isomerase</keyword>
<keyword id="KW-0456">Lyase</keyword>
<keyword id="KW-0479">Metal-binding</keyword>
<keyword id="KW-0511">Multifunctional enzyme</keyword>
<keyword id="KW-0520">NAD</keyword>
<keyword id="KW-0521">NADP</keyword>
<keyword id="KW-0547">Nucleotide-binding</keyword>
<keyword id="KW-0630">Potassium</keyword>
<keyword id="KW-1185">Reference proteome</keyword>
<protein>
    <recommendedName>
        <fullName>Bifunctional NAD(P)H-hydrate repair enzyme</fullName>
    </recommendedName>
    <alternativeName>
        <fullName>Nicotinamide nucleotide repair protein</fullName>
    </alternativeName>
    <domain>
        <recommendedName>
            <fullName>ADP-dependent (S)-NAD(P)H-hydrate dehydratase</fullName>
            <ecNumber>4.2.1.136</ecNumber>
        </recommendedName>
        <alternativeName>
            <fullName>ADP-dependent NAD(P)HX dehydratase</fullName>
        </alternativeName>
    </domain>
    <domain>
        <recommendedName>
            <fullName>NAD(P)H-hydrate epimerase</fullName>
            <ecNumber>5.1.99.6</ecNumber>
        </recommendedName>
        <alternativeName>
            <fullName>NAD(P)HX epimerase</fullName>
        </alternativeName>
    </domain>
</protein>
<comment type="function">
    <text evidence="1">Bifunctional enzyme that catalyzes the epimerization of the S- and R-forms of NAD(P)HX and the dehydration of the S-form of NAD(P)HX at the expense of ADP, which is converted to AMP. This allows the repair of both epimers of NAD(P)HX, a damaged form of NAD(P)H that is a result of enzymatic or heat-dependent hydration (By similarity).</text>
</comment>
<comment type="catalytic activity">
    <reaction>
        <text>(6S)-NADHX + ADP = AMP + phosphate + NADH + H(+)</text>
        <dbReference type="Rhea" id="RHEA:32223"/>
        <dbReference type="ChEBI" id="CHEBI:15378"/>
        <dbReference type="ChEBI" id="CHEBI:43474"/>
        <dbReference type="ChEBI" id="CHEBI:57945"/>
        <dbReference type="ChEBI" id="CHEBI:64074"/>
        <dbReference type="ChEBI" id="CHEBI:456215"/>
        <dbReference type="ChEBI" id="CHEBI:456216"/>
        <dbReference type="EC" id="4.2.1.136"/>
    </reaction>
</comment>
<comment type="catalytic activity">
    <reaction>
        <text>(6S)-NADPHX + ADP = AMP + phosphate + NADPH + H(+)</text>
        <dbReference type="Rhea" id="RHEA:32235"/>
        <dbReference type="ChEBI" id="CHEBI:15378"/>
        <dbReference type="ChEBI" id="CHEBI:43474"/>
        <dbReference type="ChEBI" id="CHEBI:57783"/>
        <dbReference type="ChEBI" id="CHEBI:64076"/>
        <dbReference type="ChEBI" id="CHEBI:456215"/>
        <dbReference type="ChEBI" id="CHEBI:456216"/>
        <dbReference type="EC" id="4.2.1.136"/>
    </reaction>
</comment>
<comment type="catalytic activity">
    <reaction>
        <text>(6R)-NADHX = (6S)-NADHX</text>
        <dbReference type="Rhea" id="RHEA:32215"/>
        <dbReference type="ChEBI" id="CHEBI:64074"/>
        <dbReference type="ChEBI" id="CHEBI:64075"/>
        <dbReference type="EC" id="5.1.99.6"/>
    </reaction>
</comment>
<comment type="catalytic activity">
    <reaction>
        <text>(6R)-NADPHX = (6S)-NADPHX</text>
        <dbReference type="Rhea" id="RHEA:32227"/>
        <dbReference type="ChEBI" id="CHEBI:64076"/>
        <dbReference type="ChEBI" id="CHEBI:64077"/>
        <dbReference type="EC" id="5.1.99.6"/>
    </reaction>
</comment>
<comment type="cofactor">
    <cofactor evidence="1">
        <name>K(+)</name>
        <dbReference type="ChEBI" id="CHEBI:29103"/>
    </cofactor>
    <text evidence="1">Binds 1 potassium ion per subunit.</text>
</comment>
<comment type="similarity">
    <text evidence="2">In the N-terminal section; belongs to the NnrE/AIBP family.</text>
</comment>
<comment type="similarity">
    <text evidence="2">In the C-terminal section; belongs to the NnrD/CARKD family.</text>
</comment>
<reference key="1">
    <citation type="journal article" date="2007" name="Nat. Genet.">
        <title>Comparative genomic analysis of three Leishmania species that cause diverse human disease.</title>
        <authorList>
            <person name="Peacock C.S."/>
            <person name="Seeger K."/>
            <person name="Harris D."/>
            <person name="Murphy L."/>
            <person name="Ruiz J.C."/>
            <person name="Quail M.A."/>
            <person name="Peters N."/>
            <person name="Adlem E."/>
            <person name="Tivey A."/>
            <person name="Aslett M."/>
            <person name="Kerhornou A."/>
            <person name="Ivens A."/>
            <person name="Fraser A."/>
            <person name="Rajandream M.-A."/>
            <person name="Carver T."/>
            <person name="Norbertczak H."/>
            <person name="Chillingworth T."/>
            <person name="Hance Z."/>
            <person name="Jagels K."/>
            <person name="Moule S."/>
            <person name="Ormond D."/>
            <person name="Rutter S."/>
            <person name="Sqaures R."/>
            <person name="Whitehead S."/>
            <person name="Rabbinowitsch E."/>
            <person name="Arrowsmith C."/>
            <person name="White B."/>
            <person name="Thurston S."/>
            <person name="Bringaud F."/>
            <person name="Baldauf S.L."/>
            <person name="Faulconbridge A."/>
            <person name="Jeffares D."/>
            <person name="Depledge D.P."/>
            <person name="Oyola S.O."/>
            <person name="Hilley J.D."/>
            <person name="Brito L.O."/>
            <person name="Tosi L.R.O."/>
            <person name="Barrell B."/>
            <person name="Cruz A.K."/>
            <person name="Mottram J.C."/>
            <person name="Smith D.F."/>
            <person name="Berriman M."/>
        </authorList>
    </citation>
    <scope>NUCLEOTIDE SEQUENCE [LARGE SCALE GENOMIC DNA]</scope>
    <source>
        <strain>JPCM5</strain>
    </source>
</reference>
<name>NNR_LEIIN</name>
<evidence type="ECO:0000250" key="1"/>
<evidence type="ECO:0000305" key="2"/>
<feature type="chain" id="PRO_0000416434" description="Bifunctional NAD(P)H-hydrate repair enzyme">
    <location>
        <begin position="1"/>
        <end position="560"/>
    </location>
</feature>
<feature type="domain" description="YjeF N-terminal">
    <location>
        <begin position="29"/>
        <end position="235"/>
    </location>
</feature>
<feature type="domain" description="YjeF C-terminal">
    <location>
        <begin position="249"/>
        <end position="547"/>
    </location>
</feature>
<feature type="region of interest" description="NAD(P)H-hydrate epimerase" evidence="1">
    <location>
        <begin position="1"/>
        <end position="241"/>
    </location>
</feature>
<feature type="region of interest" description="NADPHX 1; for epimerase activity" evidence="1">
    <location>
        <begin position="77"/>
        <end position="81"/>
    </location>
</feature>
<feature type="region of interest" description="NADPHX 1; for epimerase activity" evidence="1">
    <location>
        <begin position="149"/>
        <end position="155"/>
    </location>
</feature>
<feature type="region of interest" description="ADP-dependent (S)-NAD(P)H-hydrate dehydratase" evidence="1">
    <location>
        <begin position="249"/>
        <end position="560"/>
    </location>
</feature>
<feature type="region of interest" description="NADPHX 2; for dehydratase activity" evidence="1">
    <location>
        <begin position="417"/>
        <end position="423"/>
    </location>
</feature>
<feature type="binding site" evidence="1">
    <location>
        <position position="78"/>
    </location>
    <ligand>
        <name>K(+)</name>
        <dbReference type="ChEBI" id="CHEBI:29103"/>
    </ligand>
</feature>
<feature type="binding site" evidence="1">
    <location>
        <position position="145"/>
    </location>
    <ligand>
        <name>K(+)</name>
        <dbReference type="ChEBI" id="CHEBI:29103"/>
    </ligand>
</feature>
<feature type="binding site" evidence="1">
    <location>
        <position position="160"/>
    </location>
    <ligand>
        <name>(6S)-NADPHX</name>
        <dbReference type="ChEBI" id="CHEBI:64076"/>
        <label>1</label>
        <note>for epimerase activity</note>
    </ligand>
</feature>
<feature type="binding site" evidence="1">
    <location>
        <position position="178"/>
    </location>
    <ligand>
        <name>(6S)-NADPHX</name>
        <dbReference type="ChEBI" id="CHEBI:64076"/>
        <label>1</label>
        <note>for epimerase activity</note>
    </ligand>
</feature>
<feature type="binding site" evidence="1">
    <location>
        <position position="181"/>
    </location>
    <ligand>
        <name>K(+)</name>
        <dbReference type="ChEBI" id="CHEBI:29103"/>
    </ligand>
</feature>
<feature type="binding site" evidence="1">
    <location>
        <position position="351"/>
    </location>
    <ligand>
        <name>(6S)-NADPHX</name>
        <dbReference type="ChEBI" id="CHEBI:64076"/>
        <label>2</label>
        <note>for dehydratase activity</note>
    </ligand>
</feature>
<feature type="binding site" evidence="1">
    <location>
        <begin position="454"/>
        <end position="458"/>
    </location>
    <ligand>
        <name>ADP</name>
        <dbReference type="ChEBI" id="CHEBI:456216"/>
    </ligand>
</feature>
<feature type="binding site" evidence="1">
    <location>
        <begin position="475"/>
        <end position="484"/>
    </location>
    <ligand>
        <name>ADP</name>
        <dbReference type="ChEBI" id="CHEBI:456216"/>
    </ligand>
</feature>
<feature type="binding site" evidence="1">
    <location>
        <position position="485"/>
    </location>
    <ligand>
        <name>(6S)-NADPHX</name>
        <dbReference type="ChEBI" id="CHEBI:64076"/>
        <label>2</label>
        <note>for dehydratase activity</note>
    </ligand>
</feature>
<accession>A4HW65</accession>
<proteinExistence type="inferred from homology"/>
<organism>
    <name type="scientific">Leishmania infantum</name>
    <dbReference type="NCBI Taxonomy" id="5671"/>
    <lineage>
        <taxon>Eukaryota</taxon>
        <taxon>Discoba</taxon>
        <taxon>Euglenozoa</taxon>
        <taxon>Kinetoplastea</taxon>
        <taxon>Metakinetoplastina</taxon>
        <taxon>Trypanosomatida</taxon>
        <taxon>Trypanosomatidae</taxon>
        <taxon>Leishmaniinae</taxon>
        <taxon>Leishmania</taxon>
    </lineage>
</organism>